<comment type="similarity">
    <text evidence="1">Belongs to the UPF0223 family.</text>
</comment>
<accession>B7HME6</accession>
<dbReference type="EMBL" id="CP001177">
    <property type="protein sequence ID" value="ACJ79454.1"/>
    <property type="molecule type" value="Genomic_DNA"/>
</dbReference>
<dbReference type="SMR" id="B7HME6"/>
<dbReference type="KEGG" id="bcr:BCAH187_A4080"/>
<dbReference type="HOGENOM" id="CLU_166693_0_0_9"/>
<dbReference type="Proteomes" id="UP000002214">
    <property type="component" value="Chromosome"/>
</dbReference>
<dbReference type="Gene3D" id="1.10.220.80">
    <property type="entry name" value="BH2638-like"/>
    <property type="match status" value="1"/>
</dbReference>
<dbReference type="HAMAP" id="MF_01041">
    <property type="entry name" value="UPF0223"/>
    <property type="match status" value="1"/>
</dbReference>
<dbReference type="InterPro" id="IPR023324">
    <property type="entry name" value="BH2638-like_sf"/>
</dbReference>
<dbReference type="InterPro" id="IPR007920">
    <property type="entry name" value="UPF0223"/>
</dbReference>
<dbReference type="NCBIfam" id="NF003353">
    <property type="entry name" value="PRK04387.1"/>
    <property type="match status" value="1"/>
</dbReference>
<dbReference type="Pfam" id="PF05256">
    <property type="entry name" value="UPF0223"/>
    <property type="match status" value="1"/>
</dbReference>
<dbReference type="PIRSF" id="PIRSF037260">
    <property type="entry name" value="UPF0223"/>
    <property type="match status" value="1"/>
</dbReference>
<dbReference type="SUPFAM" id="SSF158504">
    <property type="entry name" value="BH2638-like"/>
    <property type="match status" value="1"/>
</dbReference>
<organism>
    <name type="scientific">Bacillus cereus (strain AH187)</name>
    <dbReference type="NCBI Taxonomy" id="405534"/>
    <lineage>
        <taxon>Bacteria</taxon>
        <taxon>Bacillati</taxon>
        <taxon>Bacillota</taxon>
        <taxon>Bacilli</taxon>
        <taxon>Bacillales</taxon>
        <taxon>Bacillaceae</taxon>
        <taxon>Bacillus</taxon>
        <taxon>Bacillus cereus group</taxon>
    </lineage>
</organism>
<proteinExistence type="inferred from homology"/>
<evidence type="ECO:0000255" key="1">
    <source>
        <dbReference type="HAMAP-Rule" id="MF_01041"/>
    </source>
</evidence>
<sequence length="89" mass="10800">MEYQYPLDYDWSNEEMVTIVKFYEAIEKAYEKGIVREELMGLYRRFKEIVPSKAEEKKIDKEFQEVSGYSIYRAIQKAKEIEEEKLVKM</sequence>
<protein>
    <recommendedName>
        <fullName evidence="1">UPF0223 protein BCAH187_A4080</fullName>
    </recommendedName>
</protein>
<gene>
    <name type="ordered locus">BCAH187_A4080</name>
</gene>
<name>Y4080_BACC7</name>
<feature type="chain" id="PRO_1000136026" description="UPF0223 protein BCAH187_A4080">
    <location>
        <begin position="1"/>
        <end position="89"/>
    </location>
</feature>
<reference key="1">
    <citation type="submission" date="2008-10" db="EMBL/GenBank/DDBJ databases">
        <title>Genome sequence of Bacillus cereus AH187.</title>
        <authorList>
            <person name="Dodson R.J."/>
            <person name="Durkin A.S."/>
            <person name="Rosovitz M.J."/>
            <person name="Rasko D.A."/>
            <person name="Kolsto A.B."/>
            <person name="Okstad O.A."/>
            <person name="Ravel J."/>
            <person name="Sutton G."/>
        </authorList>
    </citation>
    <scope>NUCLEOTIDE SEQUENCE [LARGE SCALE GENOMIC DNA]</scope>
    <source>
        <strain>AH187</strain>
    </source>
</reference>